<evidence type="ECO:0000255" key="1">
    <source>
        <dbReference type="HAMAP-Rule" id="MF_03149"/>
    </source>
</evidence>
<comment type="function">
    <text evidence="1">Allows the formation of correctly charged Gln-tRNA(Gln) through the transamidation of misacylated Glu-tRNA(Gln) in the mitochondria. The reaction takes place in the presence of glutamine and ATP through an activated gamma-phospho-Glu-tRNA(Gln).</text>
</comment>
<comment type="catalytic activity">
    <reaction evidence="1">
        <text>L-glutamyl-tRNA(Gln) + L-glutamine + ATP + H2O = L-glutaminyl-tRNA(Gln) + L-glutamate + ADP + phosphate + H(+)</text>
        <dbReference type="Rhea" id="RHEA:17521"/>
        <dbReference type="Rhea" id="RHEA-COMP:9681"/>
        <dbReference type="Rhea" id="RHEA-COMP:9684"/>
        <dbReference type="ChEBI" id="CHEBI:15377"/>
        <dbReference type="ChEBI" id="CHEBI:15378"/>
        <dbReference type="ChEBI" id="CHEBI:29985"/>
        <dbReference type="ChEBI" id="CHEBI:30616"/>
        <dbReference type="ChEBI" id="CHEBI:43474"/>
        <dbReference type="ChEBI" id="CHEBI:58359"/>
        <dbReference type="ChEBI" id="CHEBI:78520"/>
        <dbReference type="ChEBI" id="CHEBI:78521"/>
        <dbReference type="ChEBI" id="CHEBI:456216"/>
    </reaction>
</comment>
<comment type="subunit">
    <text evidence="1">Subunit of the heterotrimeric GatCAB amidotransferase (AdT) complex, composed of A, B and C subunits.</text>
</comment>
<comment type="subcellular location">
    <subcellularLocation>
        <location evidence="1">Mitochondrion</location>
    </subcellularLocation>
</comment>
<comment type="miscellaneous">
    <text evidence="1">This protein may be expected to contain an N-terminal transit peptide but none has been predicted.</text>
</comment>
<comment type="similarity">
    <text evidence="1">Belongs to the GatC family.</text>
</comment>
<keyword id="KW-0067">ATP-binding</keyword>
<keyword id="KW-0436">Ligase</keyword>
<keyword id="KW-0496">Mitochondrion</keyword>
<keyword id="KW-0547">Nucleotide-binding</keyword>
<keyword id="KW-0648">Protein biosynthesis</keyword>
<keyword id="KW-1185">Reference proteome</keyword>
<organism>
    <name type="scientific">Drosophila simulans</name>
    <name type="common">Fruit fly</name>
    <dbReference type="NCBI Taxonomy" id="7240"/>
    <lineage>
        <taxon>Eukaryota</taxon>
        <taxon>Metazoa</taxon>
        <taxon>Ecdysozoa</taxon>
        <taxon>Arthropoda</taxon>
        <taxon>Hexapoda</taxon>
        <taxon>Insecta</taxon>
        <taxon>Pterygota</taxon>
        <taxon>Neoptera</taxon>
        <taxon>Endopterygota</taxon>
        <taxon>Diptera</taxon>
        <taxon>Brachycera</taxon>
        <taxon>Muscomorpha</taxon>
        <taxon>Ephydroidea</taxon>
        <taxon>Drosophilidae</taxon>
        <taxon>Drosophila</taxon>
        <taxon>Sophophora</taxon>
    </lineage>
</organism>
<gene>
    <name type="ORF">GD22036</name>
</gene>
<accession>B4Q572</accession>
<protein>
    <recommendedName>
        <fullName evidence="1">Glutamyl-tRNA(Gln) amidotransferase subunit C, mitochondrial</fullName>
        <shortName evidence="1">Glu-AdT subunit C</shortName>
        <ecNumber evidence="1">6.3.5.-</ecNumber>
    </recommendedName>
</protein>
<name>GATC_DROSI</name>
<sequence>MLRLLSKRFYCKIATKSNEKATKLDFKQLTHPTKVPQTPVDAEFPDTSASEIQIDTKTIQLLERLSLVDLDSERALATLKSSIQFADKIAHINTDHVRPLYTVLEHQQLQLRNDQVTEGDCRAEVLRNAKVTDEDYYVSPPGNIPLEQ</sequence>
<proteinExistence type="inferred from homology"/>
<dbReference type="EC" id="6.3.5.-" evidence="1"/>
<dbReference type="EMBL" id="CM000361">
    <property type="protein sequence ID" value="EDX04978.1"/>
    <property type="molecule type" value="Genomic_DNA"/>
</dbReference>
<dbReference type="SMR" id="B4Q572"/>
<dbReference type="STRING" id="7240.B4Q572"/>
<dbReference type="EnsemblMetazoa" id="FBtr0221946">
    <property type="protein sequence ID" value="FBpp0220438"/>
    <property type="gene ID" value="FBgn0193449"/>
</dbReference>
<dbReference type="EnsemblMetazoa" id="XM_002079357.4">
    <property type="protein sequence ID" value="XP_002079393.1"/>
    <property type="gene ID" value="LOC6732264"/>
</dbReference>
<dbReference type="GeneID" id="6732264"/>
<dbReference type="CTD" id="283459"/>
<dbReference type="HOGENOM" id="CLU_105899_0_1_1"/>
<dbReference type="OMA" id="RCAKRTD"/>
<dbReference type="OrthoDB" id="5394539at2759"/>
<dbReference type="PhylomeDB" id="B4Q572"/>
<dbReference type="Proteomes" id="UP000000304">
    <property type="component" value="Chromosome 2L"/>
</dbReference>
<dbReference type="GO" id="GO:0030956">
    <property type="term" value="C:glutamyl-tRNA(Gln) amidotransferase complex"/>
    <property type="evidence" value="ECO:0007669"/>
    <property type="project" value="UniProtKB-UniRule"/>
</dbReference>
<dbReference type="GO" id="GO:0005739">
    <property type="term" value="C:mitochondrion"/>
    <property type="evidence" value="ECO:0007669"/>
    <property type="project" value="UniProtKB-SubCell"/>
</dbReference>
<dbReference type="GO" id="GO:0005524">
    <property type="term" value="F:ATP binding"/>
    <property type="evidence" value="ECO:0007669"/>
    <property type="project" value="UniProtKB-KW"/>
</dbReference>
<dbReference type="GO" id="GO:0050567">
    <property type="term" value="F:glutaminyl-tRNA synthase (glutamine-hydrolyzing) activity"/>
    <property type="evidence" value="ECO:0007669"/>
    <property type="project" value="UniProtKB-UniRule"/>
</dbReference>
<dbReference type="GO" id="GO:0070681">
    <property type="term" value="P:glutaminyl-tRNAGln biosynthesis via transamidation"/>
    <property type="evidence" value="ECO:0007669"/>
    <property type="project" value="UniProtKB-UniRule"/>
</dbReference>
<dbReference type="GO" id="GO:0032543">
    <property type="term" value="P:mitochondrial translation"/>
    <property type="evidence" value="ECO:0007669"/>
    <property type="project" value="UniProtKB-UniRule"/>
</dbReference>
<dbReference type="GO" id="GO:0006450">
    <property type="term" value="P:regulation of translational fidelity"/>
    <property type="evidence" value="ECO:0007669"/>
    <property type="project" value="InterPro"/>
</dbReference>
<dbReference type="HAMAP" id="MF_00122">
    <property type="entry name" value="GatC"/>
    <property type="match status" value="1"/>
</dbReference>
<dbReference type="InterPro" id="IPR036113">
    <property type="entry name" value="Asp/Glu-ADT_sf_sub_c"/>
</dbReference>
<dbReference type="InterPro" id="IPR003837">
    <property type="entry name" value="GatC"/>
</dbReference>
<dbReference type="NCBIfam" id="TIGR00135">
    <property type="entry name" value="gatC"/>
    <property type="match status" value="1"/>
</dbReference>
<dbReference type="PANTHER" id="PTHR15004">
    <property type="entry name" value="GLUTAMYL-TRNA(GLN) AMIDOTRANSFERASE SUBUNIT C, MITOCHONDRIAL"/>
    <property type="match status" value="1"/>
</dbReference>
<dbReference type="PANTHER" id="PTHR15004:SF0">
    <property type="entry name" value="GLUTAMYL-TRNA(GLN) AMIDOTRANSFERASE SUBUNIT C, MITOCHONDRIAL"/>
    <property type="match status" value="1"/>
</dbReference>
<dbReference type="Pfam" id="PF02686">
    <property type="entry name" value="GatC"/>
    <property type="match status" value="1"/>
</dbReference>
<dbReference type="SUPFAM" id="SSF141000">
    <property type="entry name" value="Glu-tRNAGln amidotransferase C subunit"/>
    <property type="match status" value="1"/>
</dbReference>
<reference key="1">
    <citation type="journal article" date="2007" name="Nature">
        <title>Evolution of genes and genomes on the Drosophila phylogeny.</title>
        <authorList>
            <consortium name="Drosophila 12 genomes consortium"/>
        </authorList>
    </citation>
    <scope>NUCLEOTIDE SEQUENCE [LARGE SCALE GENOMIC DNA]</scope>
</reference>
<feature type="chain" id="PRO_0000413308" description="Glutamyl-tRNA(Gln) amidotransferase subunit C, mitochondrial">
    <location>
        <begin position="1"/>
        <end position="148"/>
    </location>
</feature>